<feature type="chain" id="PRO_0000075695" description="Inositol phosphosphingolipids phospholipase C">
    <location>
        <begin position="1"/>
        <end position="477"/>
    </location>
</feature>
<feature type="topological domain" description="Cytoplasmic" evidence="10">
    <location>
        <begin position="1"/>
        <end position="398"/>
    </location>
</feature>
<feature type="transmembrane region" description="Helical" evidence="2">
    <location>
        <begin position="399"/>
        <end position="417"/>
    </location>
</feature>
<feature type="topological domain" description="Mitochondrial intermembrane" evidence="10">
    <location>
        <begin position="418"/>
        <end position="424"/>
    </location>
</feature>
<feature type="transmembrane region" description="Helical" evidence="2">
    <location>
        <begin position="425"/>
        <end position="449"/>
    </location>
</feature>
<feature type="topological domain" description="Cytoplasmic" evidence="6">
    <location>
        <begin position="450"/>
        <end position="477"/>
    </location>
</feature>
<feature type="active site" description="Proton acceptor" evidence="1">
    <location>
        <position position="334"/>
    </location>
</feature>
<feature type="binding site" evidence="1">
    <location>
        <position position="100"/>
    </location>
    <ligand>
        <name>Mg(2+)</name>
        <dbReference type="ChEBI" id="CHEBI:18420"/>
    </ligand>
</feature>
<feature type="site" description="Important for substrate recognition" evidence="1">
    <location>
        <position position="233"/>
    </location>
</feature>
<gene>
    <name evidence="8" type="primary">ISC1</name>
    <name type="ordered locus">YER019W</name>
</gene>
<sequence>MYNRKDRDVHERKEDGQSEFEALNGTNAIMSDNSKAYSIKFLTFNTWGLKYVSKHRKERLRAIADKLAGHSMLTPISDELLPNGGDSNENEDYDVIALQEIWCVEDWKYLASACASKYPYQRLFHSGILTGPGLAILSKVPIESTFLYRFPINGRPSAVFRGDWYVGKSIAITVLNTGTRPIAIMNSHMHAPYAKQGDAAYLCHRSCQAWDFSRLIKLYRQAGYAVIVVGDLNSRPGSLPHKFLTQEAGLVDSWEQLHGKQDLAVIARLSPLQQLLKGCTTCDSLLNTWRAQRQPDEACRLDYALIDPDFLQTVDAGVRFTERIPHLDCSVSDHFAYSCTLNIVPQGTESRPSTSVKRAKTHDRELILQRYSNYETMIECIHTYLKTAQRQKFFRGLHFWASILLLIASLVVTTFTANKAGWSSIFWVLFAIAVSISGTIDGAISFLFGRSEIRALIEVEQEVLDAEHHLQTFLSEK</sequence>
<reference key="1">
    <citation type="journal article" date="1997" name="Nature">
        <title>The nucleotide sequence of Saccharomyces cerevisiae chromosome V.</title>
        <authorList>
            <person name="Dietrich F.S."/>
            <person name="Mulligan J.T."/>
            <person name="Hennessy K.M."/>
            <person name="Yelton M.A."/>
            <person name="Allen E."/>
            <person name="Araujo R."/>
            <person name="Aviles E."/>
            <person name="Berno A."/>
            <person name="Brennan T."/>
            <person name="Carpenter J."/>
            <person name="Chen E."/>
            <person name="Cherry J.M."/>
            <person name="Chung E."/>
            <person name="Duncan M."/>
            <person name="Guzman E."/>
            <person name="Hartzell G."/>
            <person name="Hunicke-Smith S."/>
            <person name="Hyman R.W."/>
            <person name="Kayser A."/>
            <person name="Komp C."/>
            <person name="Lashkari D."/>
            <person name="Lew H."/>
            <person name="Lin D."/>
            <person name="Mosedale D."/>
            <person name="Nakahara K."/>
            <person name="Namath A."/>
            <person name="Norgren R."/>
            <person name="Oefner P."/>
            <person name="Oh C."/>
            <person name="Petel F.X."/>
            <person name="Roberts D."/>
            <person name="Sehl P."/>
            <person name="Schramm S."/>
            <person name="Shogren T."/>
            <person name="Smith V."/>
            <person name="Taylor P."/>
            <person name="Wei Y."/>
            <person name="Botstein D."/>
            <person name="Davis R.W."/>
        </authorList>
    </citation>
    <scope>NUCLEOTIDE SEQUENCE [LARGE SCALE GENOMIC DNA]</scope>
    <source>
        <strain>ATCC 204508 / S288c</strain>
    </source>
</reference>
<reference key="2">
    <citation type="journal article" date="2014" name="G3 (Bethesda)">
        <title>The reference genome sequence of Saccharomyces cerevisiae: Then and now.</title>
        <authorList>
            <person name="Engel S.R."/>
            <person name="Dietrich F.S."/>
            <person name="Fisk D.G."/>
            <person name="Binkley G."/>
            <person name="Balakrishnan R."/>
            <person name="Costanzo M.C."/>
            <person name="Dwight S.S."/>
            <person name="Hitz B.C."/>
            <person name="Karra K."/>
            <person name="Nash R.S."/>
            <person name="Weng S."/>
            <person name="Wong E.D."/>
            <person name="Lloyd P."/>
            <person name="Skrzypek M.S."/>
            <person name="Miyasato S.R."/>
            <person name="Simison M."/>
            <person name="Cherry J.M."/>
        </authorList>
    </citation>
    <scope>GENOME REANNOTATION</scope>
    <source>
        <strain>ATCC 204508 / S288c</strain>
    </source>
</reference>
<reference key="3">
    <citation type="journal article" date="2000" name="J. Biol. Chem.">
        <title>Identification of ISC1 (YER019w) as inositol phosphosphingolipid phospholipase C in Saccharomyces cerevisiae.</title>
        <authorList>
            <person name="Sawai H."/>
            <person name="Okamoto Y."/>
            <person name="Luberto C."/>
            <person name="Mao C."/>
            <person name="Bielawska A."/>
            <person name="Domae N."/>
            <person name="Hannun Y.A."/>
        </authorList>
    </citation>
    <scope>FUNCTION</scope>
    <scope>DISRUPTION PHENOTYPE</scope>
    <scope>CATALYTIC ACTIVITY</scope>
    <scope>BIOPHYSICOCHEMICAL PROPERTIES</scope>
</reference>
<reference key="4">
    <citation type="journal article" date="2003" name="Nature">
        <title>Global analysis of protein expression in yeast.</title>
        <authorList>
            <person name="Ghaemmaghami S."/>
            <person name="Huh W.-K."/>
            <person name="Bower K."/>
            <person name="Howson R.W."/>
            <person name="Belle A."/>
            <person name="Dephoure N."/>
            <person name="O'Shea E.K."/>
            <person name="Weissman J.S."/>
        </authorList>
    </citation>
    <scope>LEVEL OF PROTEIN EXPRESSION [LARGE SCALE ANALYSIS]</scope>
</reference>
<reference key="5">
    <citation type="journal article" date="2004" name="J. Biol. Chem.">
        <title>Activation and localization of inositol phosphosphingolipid phospholipase C, Isc1p, to the mitochondria during growth of Saccharomyces cerevisiae.</title>
        <authorList>
            <person name="Vaena de Avalos S."/>
            <person name="Okamoto Y."/>
            <person name="Hannun Y.A."/>
        </authorList>
    </citation>
    <scope>SUBCELLULAR LOCATION</scope>
    <scope>ACTIVITY REGULATION</scope>
</reference>
<reference key="6">
    <citation type="journal article" date="2006" name="Proc. Natl. Acad. Sci. U.S.A.">
        <title>A global topology map of the Saccharomyces cerevisiae membrane proteome.</title>
        <authorList>
            <person name="Kim H."/>
            <person name="Melen K."/>
            <person name="Oesterberg M."/>
            <person name="von Heijne G."/>
        </authorList>
    </citation>
    <scope>TOPOLOGY [LARGE SCALE ANALYSIS]</scope>
    <source>
        <strain>ATCC 208353 / W303-1A</strain>
    </source>
</reference>
<reference key="7">
    <citation type="journal article" date="2007" name="Biochim. Biophys. Acta">
        <title>Isc1 regulates sphingolipid metabolism in yeast mitochondria.</title>
        <authorList>
            <person name="Kitagaki H."/>
            <person name="Cowart L.A."/>
            <person name="Matmati N."/>
            <person name="Vaena de Avalos S."/>
            <person name="Novgorodov S.A."/>
            <person name="Zeidan Y.H."/>
            <person name="Bielawski J."/>
            <person name="Obeid L.M."/>
            <person name="Hannun Y.A."/>
        </authorList>
    </citation>
    <scope>FUNCTION</scope>
    <scope>SUBCELLULAR LOCATION</scope>
</reference>
<accession>P40015</accession>
<accession>D3DLR7</accession>
<organism>
    <name type="scientific">Saccharomyces cerevisiae (strain ATCC 204508 / S288c)</name>
    <name type="common">Baker's yeast</name>
    <dbReference type="NCBI Taxonomy" id="559292"/>
    <lineage>
        <taxon>Eukaryota</taxon>
        <taxon>Fungi</taxon>
        <taxon>Dikarya</taxon>
        <taxon>Ascomycota</taxon>
        <taxon>Saccharomycotina</taxon>
        <taxon>Saccharomycetes</taxon>
        <taxon>Saccharomycetales</taxon>
        <taxon>Saccharomycetaceae</taxon>
        <taxon>Saccharomyces</taxon>
    </lineage>
</organism>
<protein>
    <recommendedName>
        <fullName evidence="8">Inositol phosphosphingolipids phospholipase C</fullName>
        <shortName evidence="8">IPS phospholipase C</shortName>
        <shortName evidence="8">IPS-PLC</shortName>
        <ecNumber evidence="3">3.1.4.-</ecNumber>
    </recommendedName>
    <alternativeName>
        <fullName evidence="8">Neutral sphingomyelinase</fullName>
        <shortName evidence="8">N-SMase</shortName>
        <shortName evidence="8">nSMase</shortName>
    </alternativeName>
</protein>
<keyword id="KW-0256">Endoplasmic reticulum</keyword>
<keyword id="KW-0378">Hydrolase</keyword>
<keyword id="KW-0443">Lipid metabolism</keyword>
<keyword id="KW-0460">Magnesium</keyword>
<keyword id="KW-0472">Membrane</keyword>
<keyword id="KW-0479">Metal-binding</keyword>
<keyword id="KW-0496">Mitochondrion</keyword>
<keyword id="KW-1000">Mitochondrion outer membrane</keyword>
<keyword id="KW-1185">Reference proteome</keyword>
<keyword id="KW-0746">Sphingolipid metabolism</keyword>
<keyword id="KW-0812">Transmembrane</keyword>
<keyword id="KW-1133">Transmembrane helix</keyword>
<evidence type="ECO:0000250" key="1"/>
<evidence type="ECO:0000255" key="2"/>
<evidence type="ECO:0000269" key="3">
    <source>
    </source>
</evidence>
<evidence type="ECO:0000269" key="4">
    <source>
    </source>
</evidence>
<evidence type="ECO:0000269" key="5">
    <source>
    </source>
</evidence>
<evidence type="ECO:0000269" key="6">
    <source>
    </source>
</evidence>
<evidence type="ECO:0000269" key="7">
    <source>
    </source>
</evidence>
<evidence type="ECO:0000303" key="8">
    <source>
    </source>
</evidence>
<evidence type="ECO:0000305" key="9"/>
<evidence type="ECO:0000305" key="10">
    <source>
    </source>
</evidence>
<name>ISC1_YEAST</name>
<dbReference type="EC" id="3.1.4.-" evidence="3"/>
<dbReference type="EMBL" id="U18778">
    <property type="protein sequence ID" value="AAB64552.1"/>
    <property type="molecule type" value="Genomic_DNA"/>
</dbReference>
<dbReference type="EMBL" id="BK006939">
    <property type="protein sequence ID" value="DAA07671.1"/>
    <property type="molecule type" value="Genomic_DNA"/>
</dbReference>
<dbReference type="PIR" id="S50477">
    <property type="entry name" value="S50477"/>
</dbReference>
<dbReference type="RefSeq" id="NP_010935.1">
    <property type="nucleotide sequence ID" value="NM_001178910.1"/>
</dbReference>
<dbReference type="SMR" id="P40015"/>
<dbReference type="BioGRID" id="36752">
    <property type="interactions" value="263"/>
</dbReference>
<dbReference type="DIP" id="DIP-5002N"/>
<dbReference type="FunCoup" id="P40015">
    <property type="interactions" value="112"/>
</dbReference>
<dbReference type="IntAct" id="P40015">
    <property type="interactions" value="6"/>
</dbReference>
<dbReference type="STRING" id="4932.YER019W"/>
<dbReference type="SwissLipids" id="SLP:000001859"/>
<dbReference type="iPTMnet" id="P40015"/>
<dbReference type="PaxDb" id="4932-YER019W"/>
<dbReference type="PeptideAtlas" id="P40015"/>
<dbReference type="TopDownProteomics" id="P40015"/>
<dbReference type="EnsemblFungi" id="YER019W_mRNA">
    <property type="protein sequence ID" value="YER019W"/>
    <property type="gene ID" value="YER019W"/>
</dbReference>
<dbReference type="GeneID" id="856739"/>
<dbReference type="KEGG" id="sce:YER019W"/>
<dbReference type="AGR" id="SGD:S000000821"/>
<dbReference type="SGD" id="S000000821">
    <property type="gene designation" value="ISC1"/>
</dbReference>
<dbReference type="VEuPathDB" id="FungiDB:YER019W"/>
<dbReference type="eggNOG" id="KOG3873">
    <property type="taxonomic scope" value="Eukaryota"/>
</dbReference>
<dbReference type="GeneTree" id="ENSGT00390000009166"/>
<dbReference type="HOGENOM" id="CLU_034001_5_0_1"/>
<dbReference type="InParanoid" id="P40015"/>
<dbReference type="OMA" id="HNIRRET"/>
<dbReference type="OrthoDB" id="387657at2759"/>
<dbReference type="BioCyc" id="MetaCyc:YER019W-MONOMER"/>
<dbReference type="BioCyc" id="YEAST:YER019W-MONOMER"/>
<dbReference type="Reactome" id="R-SCE-9840310">
    <property type="pathway name" value="Glycosphingolipid catabolism"/>
</dbReference>
<dbReference type="UniPathway" id="UPA00222"/>
<dbReference type="BioGRID-ORCS" id="856739">
    <property type="hits" value="8 hits in 10 CRISPR screens"/>
</dbReference>
<dbReference type="PRO" id="PR:P40015"/>
<dbReference type="Proteomes" id="UP000002311">
    <property type="component" value="Chromosome V"/>
</dbReference>
<dbReference type="RNAct" id="P40015">
    <property type="molecule type" value="protein"/>
</dbReference>
<dbReference type="GO" id="GO:0071944">
    <property type="term" value="C:cell periphery"/>
    <property type="evidence" value="ECO:0007005"/>
    <property type="project" value="SGD"/>
</dbReference>
<dbReference type="GO" id="GO:0005783">
    <property type="term" value="C:endoplasmic reticulum"/>
    <property type="evidence" value="ECO:0000314"/>
    <property type="project" value="SGD"/>
</dbReference>
<dbReference type="GO" id="GO:0005789">
    <property type="term" value="C:endoplasmic reticulum membrane"/>
    <property type="evidence" value="ECO:0007669"/>
    <property type="project" value="UniProtKB-SubCell"/>
</dbReference>
<dbReference type="GO" id="GO:0016020">
    <property type="term" value="C:membrane"/>
    <property type="evidence" value="ECO:0000318"/>
    <property type="project" value="GO_Central"/>
</dbReference>
<dbReference type="GO" id="GO:0005741">
    <property type="term" value="C:mitochondrial outer membrane"/>
    <property type="evidence" value="ECO:0000314"/>
    <property type="project" value="SGD"/>
</dbReference>
<dbReference type="GO" id="GO:0005739">
    <property type="term" value="C:mitochondrion"/>
    <property type="evidence" value="ECO:0000314"/>
    <property type="project" value="SGD"/>
</dbReference>
<dbReference type="GO" id="GO:0052712">
    <property type="term" value="F:inositol phosphosphingolipid phospholipase activity"/>
    <property type="evidence" value="ECO:0000314"/>
    <property type="project" value="SGD"/>
</dbReference>
<dbReference type="GO" id="GO:0046872">
    <property type="term" value="F:metal ion binding"/>
    <property type="evidence" value="ECO:0007669"/>
    <property type="project" value="UniProtKB-KW"/>
</dbReference>
<dbReference type="GO" id="GO:0004767">
    <property type="term" value="F:sphingomyelin phosphodiesterase activity"/>
    <property type="evidence" value="ECO:0007669"/>
    <property type="project" value="InterPro"/>
</dbReference>
<dbReference type="GO" id="GO:0072711">
    <property type="term" value="P:cellular response to hydroxyurea"/>
    <property type="evidence" value="ECO:0000315"/>
    <property type="project" value="SGD"/>
</dbReference>
<dbReference type="GO" id="GO:0046513">
    <property type="term" value="P:ceramide biosynthetic process"/>
    <property type="evidence" value="ECO:0000315"/>
    <property type="project" value="SGD"/>
</dbReference>
<dbReference type="GO" id="GO:0090266">
    <property type="term" value="P:regulation of mitotic cell cycle spindle assembly checkpoint"/>
    <property type="evidence" value="ECO:0000315"/>
    <property type="project" value="SGD"/>
</dbReference>
<dbReference type="GO" id="GO:0030149">
    <property type="term" value="P:sphingolipid catabolic process"/>
    <property type="evidence" value="ECO:0000314"/>
    <property type="project" value="SGD"/>
</dbReference>
<dbReference type="FunFam" id="3.60.10.10:FF:000073">
    <property type="entry name" value="Inositol phosphosphingolipid phospholipase"/>
    <property type="match status" value="1"/>
</dbReference>
<dbReference type="Gene3D" id="3.60.10.10">
    <property type="entry name" value="Endonuclease/exonuclease/phosphatase"/>
    <property type="match status" value="1"/>
</dbReference>
<dbReference type="InterPro" id="IPR036691">
    <property type="entry name" value="Endo/exonu/phosph_ase_sf"/>
</dbReference>
<dbReference type="InterPro" id="IPR005135">
    <property type="entry name" value="Endo/exonuclease/phosphatase"/>
</dbReference>
<dbReference type="InterPro" id="IPR038772">
    <property type="entry name" value="Sph/SMPD2-like"/>
</dbReference>
<dbReference type="PANTHER" id="PTHR16320:SF24">
    <property type="entry name" value="PHOSPHODIESTERASE, PUTATIVE-RELATED"/>
    <property type="match status" value="1"/>
</dbReference>
<dbReference type="PANTHER" id="PTHR16320">
    <property type="entry name" value="SPHINGOMYELINASE FAMILY MEMBER"/>
    <property type="match status" value="1"/>
</dbReference>
<dbReference type="Pfam" id="PF03372">
    <property type="entry name" value="Exo_endo_phos"/>
    <property type="match status" value="1"/>
</dbReference>
<dbReference type="SUPFAM" id="SSF56219">
    <property type="entry name" value="DNase I-like"/>
    <property type="match status" value="1"/>
</dbReference>
<comment type="function">
    <text evidence="3 7">Responsible for the hydrolysis of the phosphosphingolipids (IPS), inositol phosphorylceramide (IPC), mannosylinositol phosphorylceramide (MIPC), and mannosyldiinositol phosphorylceramide (M(IP)2C) (PubMed:11006294). Regulates sphingolipid metabolism in mitochondria, especially the formation of alpha-hydroxylated very long chain phytoceramides. The generated ceramides contribute to the normal function of mitochondria (PubMed:17880915). Also active on sphingomyelin (SM), but this activity is probably not physiologically relevant (PubMed:11006294).</text>
</comment>
<comment type="catalytic activity">
    <reaction evidence="3">
        <text>an N-acyl-(4R)-4-hydroxysphinganine-1-phosphoinositol + H2O = 1D-myo-inositol 1-phosphate + an N-acyl-(4R)-4-hydroxysphinganine + H(+)</text>
        <dbReference type="Rhea" id="RHEA:55688"/>
        <dbReference type="ChEBI" id="CHEBI:15377"/>
        <dbReference type="ChEBI" id="CHEBI:15378"/>
        <dbReference type="ChEBI" id="CHEBI:31998"/>
        <dbReference type="ChEBI" id="CHEBI:58433"/>
        <dbReference type="ChEBI" id="CHEBI:64940"/>
    </reaction>
    <physiologicalReaction direction="left-to-right" evidence="3">
        <dbReference type="Rhea" id="RHEA:55689"/>
    </physiologicalReaction>
</comment>
<comment type="catalytic activity">
    <reaction evidence="3">
        <text>a mannosylinositol-1-phospho-N-acyl-sphingoid base + H2O = mannosylinositol-1-phosphate + an N-acyl-sphingoid base + H(+)</text>
        <dbReference type="Rhea" id="RHEA:55696"/>
        <dbReference type="ChEBI" id="CHEBI:15377"/>
        <dbReference type="ChEBI" id="CHEBI:15378"/>
        <dbReference type="ChEBI" id="CHEBI:64997"/>
        <dbReference type="ChEBI" id="CHEBI:83273"/>
        <dbReference type="ChEBI" id="CHEBI:139147"/>
    </reaction>
    <physiologicalReaction direction="left-to-right" evidence="3">
        <dbReference type="Rhea" id="RHEA:55697"/>
    </physiologicalReaction>
</comment>
<comment type="catalytic activity">
    <reaction evidence="3">
        <text>an inositol phosphomannosylinositol-1-phospho-N-acyl-(4R)-4-hydroxysphinganine + H2O = mannosyldiinositol-1-phosphate + an N-acyl-(4R)-4-hydroxysphinganine + H(+)</text>
        <dbReference type="Rhea" id="RHEA:55700"/>
        <dbReference type="ChEBI" id="CHEBI:15377"/>
        <dbReference type="ChEBI" id="CHEBI:15378"/>
        <dbReference type="ChEBI" id="CHEBI:31998"/>
        <dbReference type="ChEBI" id="CHEBI:139090"/>
        <dbReference type="ChEBI" id="CHEBI:139148"/>
    </reaction>
    <physiologicalReaction direction="left-to-right" evidence="3">
        <dbReference type="Rhea" id="RHEA:55701"/>
    </physiologicalReaction>
</comment>
<comment type="cofactor">
    <cofactor>
        <name>Mg(2+)</name>
        <dbReference type="ChEBI" id="CHEBI:18420"/>
    </cofactor>
</comment>
<comment type="activity regulation">
    <text evidence="5">Activated through localization to mitochondria in specific growth phases.</text>
</comment>
<comment type="biophysicochemical properties">
    <kinetics>
        <KM evidence="3">35.37 uM for SM</KM>
        <KM evidence="3">53.28 uM for IPC</KM>
        <KM evidence="3">27.61 uM for MIPC</KM>
        <KM evidence="3">28.65 uM for M(IP)2C</KM>
        <Vmax evidence="3">9.2 nmol/h/ug enzyme toward SM</Vmax>
        <Vmax evidence="3">2.7 nmol/h/ug enzyme toward IPC</Vmax>
        <Vmax evidence="3">7.8 nmol/h/ug enzyme toward MIPC</Vmax>
        <Vmax evidence="3">9.1 nmol/h/ug enzyme toward M(IP)2C</Vmax>
    </kinetics>
</comment>
<comment type="pathway">
    <text evidence="3">Lipid metabolism; sphingolipid metabolism.</text>
</comment>
<comment type="subcellular location">
    <subcellularLocation>
        <location evidence="5">Endoplasmic reticulum membrane</location>
        <topology evidence="2">Multi-pass membrane protein</topology>
    </subcellularLocation>
    <subcellularLocation>
        <location evidence="5 7">Mitochondrion outer membrane</location>
        <topology evidence="2">Multi-pass membrane protein</topology>
    </subcellularLocation>
    <text evidence="5">Localization is regulated in a growth-dependent manner. Predominantly in the ER during early growth and becomes associated with mitochondria in late logarithmic growth.</text>
</comment>
<comment type="disruption phenotype">
    <text evidence="3">Eliminates endogenous IPS-PLC activities.</text>
</comment>
<comment type="miscellaneous">
    <text evidence="4">Present with 2170 molecules/cell in log phase SD medium.</text>
</comment>
<comment type="similarity">
    <text evidence="9">Belongs to the neutral sphingomyelinase family.</text>
</comment>
<proteinExistence type="evidence at protein level"/>